<evidence type="ECO:0000255" key="1">
    <source>
        <dbReference type="HAMAP-Rule" id="MF_00001"/>
    </source>
</evidence>
<protein>
    <recommendedName>
        <fullName evidence="1">Aspartate carbamoyltransferase catalytic subunit</fullName>
        <ecNumber evidence="1">2.1.3.2</ecNumber>
    </recommendedName>
    <alternativeName>
        <fullName evidence="1">Aspartate transcarbamylase</fullName>
        <shortName evidence="1">ATCase</shortName>
    </alternativeName>
</protein>
<dbReference type="EC" id="2.1.3.2" evidence="1"/>
<dbReference type="EMBL" id="CP000020">
    <property type="protein sequence ID" value="AAW84901.1"/>
    <property type="molecule type" value="Genomic_DNA"/>
</dbReference>
<dbReference type="RefSeq" id="WP_011261196.1">
    <property type="nucleotide sequence ID" value="NC_006840.2"/>
</dbReference>
<dbReference type="RefSeq" id="YP_203789.1">
    <property type="nucleotide sequence ID" value="NC_006840.2"/>
</dbReference>
<dbReference type="SMR" id="Q5E7U5"/>
<dbReference type="STRING" id="312309.VF_0406"/>
<dbReference type="EnsemblBacteria" id="AAW84901">
    <property type="protein sequence ID" value="AAW84901"/>
    <property type="gene ID" value="VF_0406"/>
</dbReference>
<dbReference type="GeneID" id="54163033"/>
<dbReference type="KEGG" id="vfi:VF_0406"/>
<dbReference type="PATRIC" id="fig|312309.11.peg.396"/>
<dbReference type="eggNOG" id="COG0540">
    <property type="taxonomic scope" value="Bacteria"/>
</dbReference>
<dbReference type="HOGENOM" id="CLU_043846_1_2_6"/>
<dbReference type="OrthoDB" id="9774690at2"/>
<dbReference type="UniPathway" id="UPA00070">
    <property type="reaction ID" value="UER00116"/>
</dbReference>
<dbReference type="Proteomes" id="UP000000537">
    <property type="component" value="Chromosome I"/>
</dbReference>
<dbReference type="GO" id="GO:0005829">
    <property type="term" value="C:cytosol"/>
    <property type="evidence" value="ECO:0007669"/>
    <property type="project" value="TreeGrafter"/>
</dbReference>
<dbReference type="GO" id="GO:0016597">
    <property type="term" value="F:amino acid binding"/>
    <property type="evidence" value="ECO:0007669"/>
    <property type="project" value="InterPro"/>
</dbReference>
<dbReference type="GO" id="GO:0004070">
    <property type="term" value="F:aspartate carbamoyltransferase activity"/>
    <property type="evidence" value="ECO:0007669"/>
    <property type="project" value="UniProtKB-UniRule"/>
</dbReference>
<dbReference type="GO" id="GO:0006207">
    <property type="term" value="P:'de novo' pyrimidine nucleobase biosynthetic process"/>
    <property type="evidence" value="ECO:0007669"/>
    <property type="project" value="InterPro"/>
</dbReference>
<dbReference type="GO" id="GO:0044205">
    <property type="term" value="P:'de novo' UMP biosynthetic process"/>
    <property type="evidence" value="ECO:0007669"/>
    <property type="project" value="UniProtKB-UniRule"/>
</dbReference>
<dbReference type="GO" id="GO:0006520">
    <property type="term" value="P:amino acid metabolic process"/>
    <property type="evidence" value="ECO:0007669"/>
    <property type="project" value="InterPro"/>
</dbReference>
<dbReference type="FunFam" id="3.40.50.1370:FF:000001">
    <property type="entry name" value="Aspartate carbamoyltransferase"/>
    <property type="match status" value="1"/>
</dbReference>
<dbReference type="FunFam" id="3.40.50.1370:FF:000002">
    <property type="entry name" value="Aspartate carbamoyltransferase 2"/>
    <property type="match status" value="1"/>
</dbReference>
<dbReference type="Gene3D" id="3.40.50.1370">
    <property type="entry name" value="Aspartate/ornithine carbamoyltransferase"/>
    <property type="match status" value="2"/>
</dbReference>
<dbReference type="HAMAP" id="MF_00001">
    <property type="entry name" value="Asp_carb_tr"/>
    <property type="match status" value="1"/>
</dbReference>
<dbReference type="InterPro" id="IPR006132">
    <property type="entry name" value="Asp/Orn_carbamoyltranf_P-bd"/>
</dbReference>
<dbReference type="InterPro" id="IPR006130">
    <property type="entry name" value="Asp/Orn_carbamoylTrfase"/>
</dbReference>
<dbReference type="InterPro" id="IPR036901">
    <property type="entry name" value="Asp/Orn_carbamoylTrfase_sf"/>
</dbReference>
<dbReference type="InterPro" id="IPR002082">
    <property type="entry name" value="Asp_carbamoyltransf"/>
</dbReference>
<dbReference type="InterPro" id="IPR006131">
    <property type="entry name" value="Asp_carbamoyltransf_Asp/Orn-bd"/>
</dbReference>
<dbReference type="NCBIfam" id="TIGR00670">
    <property type="entry name" value="asp_carb_tr"/>
    <property type="match status" value="1"/>
</dbReference>
<dbReference type="NCBIfam" id="NF002032">
    <property type="entry name" value="PRK00856.1"/>
    <property type="match status" value="1"/>
</dbReference>
<dbReference type="PANTHER" id="PTHR45753:SF6">
    <property type="entry name" value="ASPARTATE CARBAMOYLTRANSFERASE"/>
    <property type="match status" value="1"/>
</dbReference>
<dbReference type="PANTHER" id="PTHR45753">
    <property type="entry name" value="ORNITHINE CARBAMOYLTRANSFERASE, MITOCHONDRIAL"/>
    <property type="match status" value="1"/>
</dbReference>
<dbReference type="Pfam" id="PF00185">
    <property type="entry name" value="OTCace"/>
    <property type="match status" value="1"/>
</dbReference>
<dbReference type="Pfam" id="PF02729">
    <property type="entry name" value="OTCace_N"/>
    <property type="match status" value="1"/>
</dbReference>
<dbReference type="PRINTS" id="PR00100">
    <property type="entry name" value="AOTCASE"/>
</dbReference>
<dbReference type="PRINTS" id="PR00101">
    <property type="entry name" value="ATCASE"/>
</dbReference>
<dbReference type="SUPFAM" id="SSF53671">
    <property type="entry name" value="Aspartate/ornithine carbamoyltransferase"/>
    <property type="match status" value="1"/>
</dbReference>
<dbReference type="PROSITE" id="PS00097">
    <property type="entry name" value="CARBAMOYLTRANSFERASE"/>
    <property type="match status" value="1"/>
</dbReference>
<feature type="chain" id="PRO_0000113224" description="Aspartate carbamoyltransferase catalytic subunit">
    <location>
        <begin position="1"/>
        <end position="309"/>
    </location>
</feature>
<feature type="binding site" evidence="1">
    <location>
        <position position="55"/>
    </location>
    <ligand>
        <name>carbamoyl phosphate</name>
        <dbReference type="ChEBI" id="CHEBI:58228"/>
    </ligand>
</feature>
<feature type="binding site" evidence="1">
    <location>
        <position position="56"/>
    </location>
    <ligand>
        <name>carbamoyl phosphate</name>
        <dbReference type="ChEBI" id="CHEBI:58228"/>
    </ligand>
</feature>
<feature type="binding site" evidence="1">
    <location>
        <position position="85"/>
    </location>
    <ligand>
        <name>L-aspartate</name>
        <dbReference type="ChEBI" id="CHEBI:29991"/>
    </ligand>
</feature>
<feature type="binding site" evidence="1">
    <location>
        <position position="106"/>
    </location>
    <ligand>
        <name>carbamoyl phosphate</name>
        <dbReference type="ChEBI" id="CHEBI:58228"/>
    </ligand>
</feature>
<feature type="binding site" evidence="1">
    <location>
        <position position="135"/>
    </location>
    <ligand>
        <name>carbamoyl phosphate</name>
        <dbReference type="ChEBI" id="CHEBI:58228"/>
    </ligand>
</feature>
<feature type="binding site" evidence="1">
    <location>
        <position position="138"/>
    </location>
    <ligand>
        <name>carbamoyl phosphate</name>
        <dbReference type="ChEBI" id="CHEBI:58228"/>
    </ligand>
</feature>
<feature type="binding site" evidence="1">
    <location>
        <position position="168"/>
    </location>
    <ligand>
        <name>L-aspartate</name>
        <dbReference type="ChEBI" id="CHEBI:29991"/>
    </ligand>
</feature>
<feature type="binding site" evidence="1">
    <location>
        <position position="230"/>
    </location>
    <ligand>
        <name>L-aspartate</name>
        <dbReference type="ChEBI" id="CHEBI:29991"/>
    </ligand>
</feature>
<feature type="binding site" evidence="1">
    <location>
        <position position="268"/>
    </location>
    <ligand>
        <name>carbamoyl phosphate</name>
        <dbReference type="ChEBI" id="CHEBI:58228"/>
    </ligand>
</feature>
<feature type="binding site" evidence="1">
    <location>
        <position position="269"/>
    </location>
    <ligand>
        <name>carbamoyl phosphate</name>
        <dbReference type="ChEBI" id="CHEBI:58228"/>
    </ligand>
</feature>
<keyword id="KW-0665">Pyrimidine biosynthesis</keyword>
<keyword id="KW-1185">Reference proteome</keyword>
<keyword id="KW-0808">Transferase</keyword>
<accession>Q5E7U5</accession>
<reference key="1">
    <citation type="journal article" date="2005" name="Proc. Natl. Acad. Sci. U.S.A.">
        <title>Complete genome sequence of Vibrio fischeri: a symbiotic bacterium with pathogenic congeners.</title>
        <authorList>
            <person name="Ruby E.G."/>
            <person name="Urbanowski M."/>
            <person name="Campbell J."/>
            <person name="Dunn A."/>
            <person name="Faini M."/>
            <person name="Gunsalus R."/>
            <person name="Lostroh P."/>
            <person name="Lupp C."/>
            <person name="McCann J."/>
            <person name="Millikan D."/>
            <person name="Schaefer A."/>
            <person name="Stabb E."/>
            <person name="Stevens A."/>
            <person name="Visick K."/>
            <person name="Whistler C."/>
            <person name="Greenberg E.P."/>
        </authorList>
    </citation>
    <scope>NUCLEOTIDE SEQUENCE [LARGE SCALE GENOMIC DNA]</scope>
    <source>
        <strain>ATCC 700601 / ES114</strain>
    </source>
</reference>
<name>PYRB_ALIF1</name>
<gene>
    <name evidence="1" type="primary">pyrB</name>
    <name type="ordered locus">VF_0406</name>
</gene>
<proteinExistence type="inferred from homology"/>
<comment type="function">
    <text evidence="1">Catalyzes the condensation of carbamoyl phosphate and aspartate to form carbamoyl aspartate and inorganic phosphate, the committed step in the de novo pyrimidine nucleotide biosynthesis pathway.</text>
</comment>
<comment type="catalytic activity">
    <reaction evidence="1">
        <text>carbamoyl phosphate + L-aspartate = N-carbamoyl-L-aspartate + phosphate + H(+)</text>
        <dbReference type="Rhea" id="RHEA:20013"/>
        <dbReference type="ChEBI" id="CHEBI:15378"/>
        <dbReference type="ChEBI" id="CHEBI:29991"/>
        <dbReference type="ChEBI" id="CHEBI:32814"/>
        <dbReference type="ChEBI" id="CHEBI:43474"/>
        <dbReference type="ChEBI" id="CHEBI:58228"/>
        <dbReference type="EC" id="2.1.3.2"/>
    </reaction>
</comment>
<comment type="pathway">
    <text evidence="1">Pyrimidine metabolism; UMP biosynthesis via de novo pathway; (S)-dihydroorotate from bicarbonate: step 2/3.</text>
</comment>
<comment type="subunit">
    <text evidence="1">Heterododecamer (2C3:3R2) of six catalytic PyrB chains organized as two trimers (C3), and six regulatory PyrI chains organized as three dimers (R2).</text>
</comment>
<comment type="similarity">
    <text evidence="1">Belongs to the aspartate/ornithine carbamoyltransferase superfamily. ATCase family.</text>
</comment>
<organism>
    <name type="scientific">Aliivibrio fischeri (strain ATCC 700601 / ES114)</name>
    <name type="common">Vibrio fischeri</name>
    <dbReference type="NCBI Taxonomy" id="312309"/>
    <lineage>
        <taxon>Bacteria</taxon>
        <taxon>Pseudomonadati</taxon>
        <taxon>Pseudomonadota</taxon>
        <taxon>Gammaproteobacteria</taxon>
        <taxon>Vibrionales</taxon>
        <taxon>Vibrionaceae</taxon>
        <taxon>Aliivibrio</taxon>
    </lineage>
</organism>
<sequence length="309" mass="34525">MTNSLYQKHIISIPELSRQELELIVETAGKIKKEPQPDLLKNKIVASCFFEASTRTRLSFETAIQRLGGSVIGFDTAGNTSLAQKGETLADSVQIITSYADAYVMRHPQEGAARLASEFSNGTPVINAGDGANQHPTQTLLDLYTIYETQGRLDNLNVAFVGDLKYGRTVHSLTQALAKFEGIKFFFIAPEVLAMPDYICEELDELGIEYQLVESMDDAIPELDILYMTRVQKERFDESEYAHIKSAYILSAENLQPARENLKVLHPLPRVDEIDTDVDATPHAYYFQQAENGVYARQALLALVLNETL</sequence>